<organism>
    <name type="scientific">Photobacterium profundum (strain SS9)</name>
    <dbReference type="NCBI Taxonomy" id="298386"/>
    <lineage>
        <taxon>Bacteria</taxon>
        <taxon>Pseudomonadati</taxon>
        <taxon>Pseudomonadota</taxon>
        <taxon>Gammaproteobacteria</taxon>
        <taxon>Vibrionales</taxon>
        <taxon>Vibrionaceae</taxon>
        <taxon>Photobacterium</taxon>
    </lineage>
</organism>
<protein>
    <recommendedName>
        <fullName>UPF0758 protein PBPRA0202</fullName>
    </recommendedName>
</protein>
<comment type="similarity">
    <text evidence="2">Belongs to the UPF0758 family.</text>
</comment>
<proteinExistence type="inferred from homology"/>
<sequence length="224" mass="25033">MSLKLLPEESRPREKLLTRGAKALSDAELLAIFLRTGIKGMNAVELATHLLAEFGSLRALFAADQTLFCLHKGLGPAKYAQLQAIIEMSQRHLEETLKEGDVLTSPQHTRHYLSQLLRDRQREVFYVLFLDNQHRVIAGEVLFEGTINSAAVYPREIVKRSLEFNAVALILAHNHPSGVAEPSQSDLRITRTISDALALVDIRVLDHFIVGDGEIVSFSEQGWL</sequence>
<name>Y202_PHOPR</name>
<keyword id="KW-0378">Hydrolase</keyword>
<keyword id="KW-0479">Metal-binding</keyword>
<keyword id="KW-0482">Metalloprotease</keyword>
<keyword id="KW-0645">Protease</keyword>
<keyword id="KW-1185">Reference proteome</keyword>
<keyword id="KW-0862">Zinc</keyword>
<feature type="chain" id="PRO_0000190716" description="UPF0758 protein PBPRA0202">
    <location>
        <begin position="1"/>
        <end position="224"/>
    </location>
</feature>
<feature type="domain" description="MPN" evidence="1">
    <location>
        <begin position="102"/>
        <end position="224"/>
    </location>
</feature>
<feature type="short sequence motif" description="JAMM motif" evidence="1">
    <location>
        <begin position="173"/>
        <end position="186"/>
    </location>
</feature>
<feature type="binding site" evidence="1">
    <location>
        <position position="173"/>
    </location>
    <ligand>
        <name>Zn(2+)</name>
        <dbReference type="ChEBI" id="CHEBI:29105"/>
        <note>catalytic</note>
    </ligand>
</feature>
<feature type="binding site" evidence="1">
    <location>
        <position position="175"/>
    </location>
    <ligand>
        <name>Zn(2+)</name>
        <dbReference type="ChEBI" id="CHEBI:29105"/>
        <note>catalytic</note>
    </ligand>
</feature>
<feature type="binding site" evidence="1">
    <location>
        <position position="186"/>
    </location>
    <ligand>
        <name>Zn(2+)</name>
        <dbReference type="ChEBI" id="CHEBI:29105"/>
        <note>catalytic</note>
    </ligand>
</feature>
<evidence type="ECO:0000255" key="1">
    <source>
        <dbReference type="PROSITE-ProRule" id="PRU01182"/>
    </source>
</evidence>
<evidence type="ECO:0000305" key="2"/>
<gene>
    <name type="ordered locus">PBPRA0202</name>
</gene>
<reference key="1">
    <citation type="journal article" date="2005" name="Science">
        <title>Life at depth: Photobacterium profundum genome sequence and expression analysis.</title>
        <authorList>
            <person name="Vezzi A."/>
            <person name="Campanaro S."/>
            <person name="D'Angelo M."/>
            <person name="Simonato F."/>
            <person name="Vitulo N."/>
            <person name="Lauro F.M."/>
            <person name="Cestaro A."/>
            <person name="Malacrida G."/>
            <person name="Simionati B."/>
            <person name="Cannata N."/>
            <person name="Romualdi C."/>
            <person name="Bartlett D.H."/>
            <person name="Valle G."/>
        </authorList>
    </citation>
    <scope>NUCLEOTIDE SEQUENCE [LARGE SCALE GENOMIC DNA]</scope>
    <source>
        <strain>ATCC BAA-1253 / SS9</strain>
    </source>
</reference>
<dbReference type="EMBL" id="CR378663">
    <property type="protein sequence ID" value="CAG18641.1"/>
    <property type="molecule type" value="Genomic_DNA"/>
</dbReference>
<dbReference type="RefSeq" id="WP_011217018.1">
    <property type="nucleotide sequence ID" value="NC_006370.1"/>
</dbReference>
<dbReference type="SMR" id="Q6LVN4"/>
<dbReference type="STRING" id="298386.PBPRA0202"/>
<dbReference type="KEGG" id="ppr:PBPRA0202"/>
<dbReference type="eggNOG" id="COG2003">
    <property type="taxonomic scope" value="Bacteria"/>
</dbReference>
<dbReference type="HOGENOM" id="CLU_073529_0_1_6"/>
<dbReference type="Proteomes" id="UP000000593">
    <property type="component" value="Chromosome 1"/>
</dbReference>
<dbReference type="GO" id="GO:0046872">
    <property type="term" value="F:metal ion binding"/>
    <property type="evidence" value="ECO:0007669"/>
    <property type="project" value="UniProtKB-KW"/>
</dbReference>
<dbReference type="GO" id="GO:0008237">
    <property type="term" value="F:metallopeptidase activity"/>
    <property type="evidence" value="ECO:0007669"/>
    <property type="project" value="UniProtKB-KW"/>
</dbReference>
<dbReference type="GO" id="GO:0006508">
    <property type="term" value="P:proteolysis"/>
    <property type="evidence" value="ECO:0007669"/>
    <property type="project" value="UniProtKB-KW"/>
</dbReference>
<dbReference type="CDD" id="cd08071">
    <property type="entry name" value="MPN_DUF2466"/>
    <property type="match status" value="1"/>
</dbReference>
<dbReference type="Gene3D" id="1.10.150.20">
    <property type="entry name" value="5' to 3' exonuclease, C-terminal subdomain"/>
    <property type="match status" value="1"/>
</dbReference>
<dbReference type="Gene3D" id="3.40.140.10">
    <property type="entry name" value="Cytidine Deaminase, domain 2"/>
    <property type="match status" value="1"/>
</dbReference>
<dbReference type="InterPro" id="IPR037518">
    <property type="entry name" value="MPN"/>
</dbReference>
<dbReference type="InterPro" id="IPR025657">
    <property type="entry name" value="RadC_JAB"/>
</dbReference>
<dbReference type="InterPro" id="IPR010994">
    <property type="entry name" value="RuvA_2-like"/>
</dbReference>
<dbReference type="InterPro" id="IPR001405">
    <property type="entry name" value="UPF0758"/>
</dbReference>
<dbReference type="InterPro" id="IPR020891">
    <property type="entry name" value="UPF0758_CS"/>
</dbReference>
<dbReference type="InterPro" id="IPR046778">
    <property type="entry name" value="UPF0758_N"/>
</dbReference>
<dbReference type="NCBIfam" id="NF000642">
    <property type="entry name" value="PRK00024.1"/>
    <property type="match status" value="1"/>
</dbReference>
<dbReference type="NCBIfam" id="TIGR00608">
    <property type="entry name" value="radc"/>
    <property type="match status" value="1"/>
</dbReference>
<dbReference type="PANTHER" id="PTHR30471">
    <property type="entry name" value="DNA REPAIR PROTEIN RADC"/>
    <property type="match status" value="1"/>
</dbReference>
<dbReference type="PANTHER" id="PTHR30471:SF3">
    <property type="entry name" value="UPF0758 PROTEIN YEES-RELATED"/>
    <property type="match status" value="1"/>
</dbReference>
<dbReference type="Pfam" id="PF04002">
    <property type="entry name" value="RadC"/>
    <property type="match status" value="1"/>
</dbReference>
<dbReference type="Pfam" id="PF20582">
    <property type="entry name" value="UPF0758_N"/>
    <property type="match status" value="1"/>
</dbReference>
<dbReference type="SUPFAM" id="SSF47781">
    <property type="entry name" value="RuvA domain 2-like"/>
    <property type="match status" value="1"/>
</dbReference>
<dbReference type="PROSITE" id="PS50249">
    <property type="entry name" value="MPN"/>
    <property type="match status" value="1"/>
</dbReference>
<dbReference type="PROSITE" id="PS01302">
    <property type="entry name" value="UPF0758"/>
    <property type="match status" value="1"/>
</dbReference>
<accession>Q6LVN4</accession>